<feature type="chain" id="PRO_0000153485" description="Histidinol-phosphate aminotransferase">
    <location>
        <begin position="1"/>
        <end position="365"/>
    </location>
</feature>
<feature type="modified residue" description="N6-(pyridoxal phosphate)lysine" evidence="1">
    <location>
        <position position="220"/>
    </location>
</feature>
<keyword id="KW-0028">Amino-acid biosynthesis</keyword>
<keyword id="KW-0032">Aminotransferase</keyword>
<keyword id="KW-0368">Histidine biosynthesis</keyword>
<keyword id="KW-0663">Pyridoxal phosphate</keyword>
<keyword id="KW-0808">Transferase</keyword>
<protein>
    <recommendedName>
        <fullName evidence="1">Histidinol-phosphate aminotransferase</fullName>
        <ecNumber evidence="1">2.6.1.9</ecNumber>
    </recommendedName>
    <alternativeName>
        <fullName evidence="1">Imidazole acetol-phosphate transaminase</fullName>
    </alternativeName>
</protein>
<reference key="1">
    <citation type="journal article" date="2000" name="Nature">
        <title>The genome sequence of the plant pathogen Xylella fastidiosa.</title>
        <authorList>
            <person name="Simpson A.J.G."/>
            <person name="Reinach F.C."/>
            <person name="Arruda P."/>
            <person name="Abreu F.A."/>
            <person name="Acencio M."/>
            <person name="Alvarenga R."/>
            <person name="Alves L.M.C."/>
            <person name="Araya J.E."/>
            <person name="Baia G.S."/>
            <person name="Baptista C.S."/>
            <person name="Barros M.H."/>
            <person name="Bonaccorsi E.D."/>
            <person name="Bordin S."/>
            <person name="Bove J.M."/>
            <person name="Briones M.R.S."/>
            <person name="Bueno M.R.P."/>
            <person name="Camargo A.A."/>
            <person name="Camargo L.E.A."/>
            <person name="Carraro D.M."/>
            <person name="Carrer H."/>
            <person name="Colauto N.B."/>
            <person name="Colombo C."/>
            <person name="Costa F.F."/>
            <person name="Costa M.C.R."/>
            <person name="Costa-Neto C.M."/>
            <person name="Coutinho L.L."/>
            <person name="Cristofani M."/>
            <person name="Dias-Neto E."/>
            <person name="Docena C."/>
            <person name="El-Dorry H."/>
            <person name="Facincani A.P."/>
            <person name="Ferreira A.J.S."/>
            <person name="Ferreira V.C.A."/>
            <person name="Ferro J.A."/>
            <person name="Fraga J.S."/>
            <person name="Franca S.C."/>
            <person name="Franco M.C."/>
            <person name="Frohme M."/>
            <person name="Furlan L.R."/>
            <person name="Garnier M."/>
            <person name="Goldman G.H."/>
            <person name="Goldman M.H.S."/>
            <person name="Gomes S.L."/>
            <person name="Gruber A."/>
            <person name="Ho P.L."/>
            <person name="Hoheisel J.D."/>
            <person name="Junqueira M.L."/>
            <person name="Kemper E.L."/>
            <person name="Kitajima J.P."/>
            <person name="Krieger J.E."/>
            <person name="Kuramae E.E."/>
            <person name="Laigret F."/>
            <person name="Lambais M.R."/>
            <person name="Leite L.C.C."/>
            <person name="Lemos E.G.M."/>
            <person name="Lemos M.V.F."/>
            <person name="Lopes S.A."/>
            <person name="Lopes C.R."/>
            <person name="Machado J.A."/>
            <person name="Machado M.A."/>
            <person name="Madeira A.M.B.N."/>
            <person name="Madeira H.M.F."/>
            <person name="Marino C.L."/>
            <person name="Marques M.V."/>
            <person name="Martins E.A.L."/>
            <person name="Martins E.M.F."/>
            <person name="Matsukuma A.Y."/>
            <person name="Menck C.F.M."/>
            <person name="Miracca E.C."/>
            <person name="Miyaki C.Y."/>
            <person name="Monteiro-Vitorello C.B."/>
            <person name="Moon D.H."/>
            <person name="Nagai M.A."/>
            <person name="Nascimento A.L.T.O."/>
            <person name="Netto L.E.S."/>
            <person name="Nhani A. Jr."/>
            <person name="Nobrega F.G."/>
            <person name="Nunes L.R."/>
            <person name="Oliveira M.A."/>
            <person name="de Oliveira M.C."/>
            <person name="de Oliveira R.C."/>
            <person name="Palmieri D.A."/>
            <person name="Paris A."/>
            <person name="Peixoto B.R."/>
            <person name="Pereira G.A.G."/>
            <person name="Pereira H.A. Jr."/>
            <person name="Pesquero J.B."/>
            <person name="Quaggio R.B."/>
            <person name="Roberto P.G."/>
            <person name="Rodrigues V."/>
            <person name="de Rosa A.J.M."/>
            <person name="de Rosa V.E. Jr."/>
            <person name="de Sa R.G."/>
            <person name="Santelli R.V."/>
            <person name="Sawasaki H.E."/>
            <person name="da Silva A.C.R."/>
            <person name="da Silva A.M."/>
            <person name="da Silva F.R."/>
            <person name="Silva W.A. Jr."/>
            <person name="da Silveira J.F."/>
            <person name="Silvestri M.L.Z."/>
            <person name="Siqueira W.J."/>
            <person name="de Souza A.A."/>
            <person name="de Souza A.P."/>
            <person name="Terenzi M.F."/>
            <person name="Truffi D."/>
            <person name="Tsai S.M."/>
            <person name="Tsuhako M.H."/>
            <person name="Vallada H."/>
            <person name="Van Sluys M.A."/>
            <person name="Verjovski-Almeida S."/>
            <person name="Vettore A.L."/>
            <person name="Zago M.A."/>
            <person name="Zatz M."/>
            <person name="Meidanis J."/>
            <person name="Setubal J.C."/>
        </authorList>
    </citation>
    <scope>NUCLEOTIDE SEQUENCE [LARGE SCALE GENOMIC DNA]</scope>
    <source>
        <strain>9a5c</strain>
    </source>
</reference>
<dbReference type="EC" id="2.6.1.9" evidence="1"/>
<dbReference type="EMBL" id="AE003849">
    <property type="protein sequence ID" value="AAF85017.1"/>
    <property type="molecule type" value="Genomic_DNA"/>
</dbReference>
<dbReference type="PIR" id="E82585">
    <property type="entry name" value="E82585"/>
</dbReference>
<dbReference type="RefSeq" id="WP_010894666.1">
    <property type="nucleotide sequence ID" value="NC_002488.3"/>
</dbReference>
<dbReference type="SMR" id="Q9PBC6"/>
<dbReference type="STRING" id="160492.XF_2218"/>
<dbReference type="KEGG" id="xfa:XF_2218"/>
<dbReference type="PATRIC" id="fig|160492.11.peg.2360"/>
<dbReference type="eggNOG" id="COG0079">
    <property type="taxonomic scope" value="Bacteria"/>
</dbReference>
<dbReference type="HOGENOM" id="CLU_017584_3_1_6"/>
<dbReference type="UniPathway" id="UPA00031">
    <property type="reaction ID" value="UER00012"/>
</dbReference>
<dbReference type="Proteomes" id="UP000000812">
    <property type="component" value="Chromosome"/>
</dbReference>
<dbReference type="GO" id="GO:0004400">
    <property type="term" value="F:histidinol-phosphate transaminase activity"/>
    <property type="evidence" value="ECO:0007669"/>
    <property type="project" value="UniProtKB-UniRule"/>
</dbReference>
<dbReference type="GO" id="GO:0030170">
    <property type="term" value="F:pyridoxal phosphate binding"/>
    <property type="evidence" value="ECO:0007669"/>
    <property type="project" value="InterPro"/>
</dbReference>
<dbReference type="GO" id="GO:0000105">
    <property type="term" value="P:L-histidine biosynthetic process"/>
    <property type="evidence" value="ECO:0007669"/>
    <property type="project" value="UniProtKB-UniRule"/>
</dbReference>
<dbReference type="CDD" id="cd00609">
    <property type="entry name" value="AAT_like"/>
    <property type="match status" value="1"/>
</dbReference>
<dbReference type="Gene3D" id="3.90.1150.10">
    <property type="entry name" value="Aspartate Aminotransferase, domain 1"/>
    <property type="match status" value="1"/>
</dbReference>
<dbReference type="Gene3D" id="3.40.640.10">
    <property type="entry name" value="Type I PLP-dependent aspartate aminotransferase-like (Major domain)"/>
    <property type="match status" value="1"/>
</dbReference>
<dbReference type="HAMAP" id="MF_01023">
    <property type="entry name" value="HisC_aminotrans_2"/>
    <property type="match status" value="1"/>
</dbReference>
<dbReference type="InterPro" id="IPR004839">
    <property type="entry name" value="Aminotransferase_I/II_large"/>
</dbReference>
<dbReference type="InterPro" id="IPR005861">
    <property type="entry name" value="HisP_aminotrans"/>
</dbReference>
<dbReference type="InterPro" id="IPR015424">
    <property type="entry name" value="PyrdxlP-dep_Trfase"/>
</dbReference>
<dbReference type="InterPro" id="IPR015421">
    <property type="entry name" value="PyrdxlP-dep_Trfase_major"/>
</dbReference>
<dbReference type="InterPro" id="IPR015422">
    <property type="entry name" value="PyrdxlP-dep_Trfase_small"/>
</dbReference>
<dbReference type="NCBIfam" id="TIGR01141">
    <property type="entry name" value="hisC"/>
    <property type="match status" value="1"/>
</dbReference>
<dbReference type="PANTHER" id="PTHR42885:SF2">
    <property type="entry name" value="HISTIDINOL-PHOSPHATE AMINOTRANSFERASE"/>
    <property type="match status" value="1"/>
</dbReference>
<dbReference type="PANTHER" id="PTHR42885">
    <property type="entry name" value="HISTIDINOL-PHOSPHATE AMINOTRANSFERASE-RELATED"/>
    <property type="match status" value="1"/>
</dbReference>
<dbReference type="Pfam" id="PF00155">
    <property type="entry name" value="Aminotran_1_2"/>
    <property type="match status" value="1"/>
</dbReference>
<dbReference type="SUPFAM" id="SSF53383">
    <property type="entry name" value="PLP-dependent transferases"/>
    <property type="match status" value="1"/>
</dbReference>
<evidence type="ECO:0000255" key="1">
    <source>
        <dbReference type="HAMAP-Rule" id="MF_01023"/>
    </source>
</evidence>
<sequence>MNTQTPTVLDLVRQELRNFAGYSSARSVALTGDLWLNANESAWPNPADSHATMRRYPEPQPPKLRQMLAALYGCVPEQLLIGRGSDEGIDLLVRAVCEPGCDPVLVTPPVFGMYAVSAQLQNAPVIQVPLVDDAAGFHADVPAIITAAQTSRAKLVFLCSPSNPVGAAIPLQQIETILQTLAGTALVVVDEAYGEFSDVPSVVPLLARYPHLVVLRTLSKAHALAAVRIGSVIADAHLVAILRRCQAPYPLPTPCVSLAEQGLSAAALQVTAQRVAEIRAERERLGAALACLSGVRRVYPSQGNFLLVRFDDAEAALQALYAAGVVVRDQRAAPQLHDALRLTVGTPEQNTRLLAVLRDIQAVPA</sequence>
<gene>
    <name evidence="1" type="primary">hisC</name>
    <name type="ordered locus">XF_2218</name>
</gene>
<proteinExistence type="inferred from homology"/>
<comment type="catalytic activity">
    <reaction evidence="1">
        <text>L-histidinol phosphate + 2-oxoglutarate = 3-(imidazol-4-yl)-2-oxopropyl phosphate + L-glutamate</text>
        <dbReference type="Rhea" id="RHEA:23744"/>
        <dbReference type="ChEBI" id="CHEBI:16810"/>
        <dbReference type="ChEBI" id="CHEBI:29985"/>
        <dbReference type="ChEBI" id="CHEBI:57766"/>
        <dbReference type="ChEBI" id="CHEBI:57980"/>
        <dbReference type="EC" id="2.6.1.9"/>
    </reaction>
</comment>
<comment type="cofactor">
    <cofactor evidence="1">
        <name>pyridoxal 5'-phosphate</name>
        <dbReference type="ChEBI" id="CHEBI:597326"/>
    </cofactor>
</comment>
<comment type="pathway">
    <text evidence="1">Amino-acid biosynthesis; L-histidine biosynthesis; L-histidine from 5-phospho-alpha-D-ribose 1-diphosphate: step 7/9.</text>
</comment>
<comment type="subunit">
    <text evidence="1">Homodimer.</text>
</comment>
<comment type="similarity">
    <text evidence="1">Belongs to the class-II pyridoxal-phosphate-dependent aminotransferase family. Histidinol-phosphate aminotransferase subfamily.</text>
</comment>
<accession>Q9PBC6</accession>
<organism>
    <name type="scientific">Xylella fastidiosa (strain 9a5c)</name>
    <dbReference type="NCBI Taxonomy" id="160492"/>
    <lineage>
        <taxon>Bacteria</taxon>
        <taxon>Pseudomonadati</taxon>
        <taxon>Pseudomonadota</taxon>
        <taxon>Gammaproteobacteria</taxon>
        <taxon>Lysobacterales</taxon>
        <taxon>Lysobacteraceae</taxon>
        <taxon>Xylella</taxon>
    </lineage>
</organism>
<name>HIS8_XYLFA</name>